<sequence length="361" mass="40986">MKNLFLFCRAGYEKECAAEIQQRAAELNVGGFVKANNNDAYVVYQCFEEDGGDTLVKQLPLDSLIFARQMFAASELLADLPESDRVSPIVAALSEVSKAGELRVETPDTNEAKELSAFCRKFTVPLRQHLKKSGSLLAQENPKRPIIHVCFIGPGRAYVGYSFSNNSSPYFMGIPRLKMAADAPSRSSLKLDEAFAQFVPKEEQEVRVRSGMNAVDLGACPGGWTYQLVRRGMMVSAVDNGPMNEKLMETGQVKHFREDGFRFEPQRKNIYWLVCDMVEKPARVAELIEAWAINGWFKEAIFNLKLPMKSRYKEVMAILNTMQEILKENGINEFQLQCKHLYHDRDEVTVHLWIRPSQAWN</sequence>
<reference key="1">
    <citation type="submission" date="2006-09" db="EMBL/GenBank/DDBJ databases">
        <title>Complete sequence of chromosome 1 of Shewanella sp. ANA-3.</title>
        <authorList>
            <person name="Copeland A."/>
            <person name="Lucas S."/>
            <person name="Lapidus A."/>
            <person name="Barry K."/>
            <person name="Detter J.C."/>
            <person name="Glavina del Rio T."/>
            <person name="Hammon N."/>
            <person name="Israni S."/>
            <person name="Dalin E."/>
            <person name="Tice H."/>
            <person name="Pitluck S."/>
            <person name="Chertkov O."/>
            <person name="Brettin T."/>
            <person name="Bruce D."/>
            <person name="Han C."/>
            <person name="Tapia R."/>
            <person name="Gilna P."/>
            <person name="Schmutz J."/>
            <person name="Larimer F."/>
            <person name="Land M."/>
            <person name="Hauser L."/>
            <person name="Kyrpides N."/>
            <person name="Kim E."/>
            <person name="Newman D."/>
            <person name="Salticov C."/>
            <person name="Konstantinidis K."/>
            <person name="Klappenback J."/>
            <person name="Tiedje J."/>
            <person name="Richardson P."/>
        </authorList>
    </citation>
    <scope>NUCLEOTIDE SEQUENCE [LARGE SCALE GENOMIC DNA]</scope>
    <source>
        <strain>ANA-3</strain>
    </source>
</reference>
<proteinExistence type="inferred from homology"/>
<protein>
    <recommendedName>
        <fullName evidence="1">Ribosomal RNA large subunit methyltransferase M</fullName>
        <ecNumber evidence="1">2.1.1.186</ecNumber>
    </recommendedName>
    <alternativeName>
        <fullName evidence="1">23S rRNA (cytidine2498-2'-O)-methyltransferase</fullName>
    </alternativeName>
    <alternativeName>
        <fullName evidence="1">23S rRNA 2'-O-ribose methyltransferase RlmM</fullName>
    </alternativeName>
</protein>
<comment type="function">
    <text evidence="1">Catalyzes the 2'-O-methylation at nucleotide C2498 in 23S rRNA.</text>
</comment>
<comment type="catalytic activity">
    <reaction evidence="1">
        <text>cytidine(2498) in 23S rRNA + S-adenosyl-L-methionine = 2'-O-methylcytidine(2498) in 23S rRNA + S-adenosyl-L-homocysteine + H(+)</text>
        <dbReference type="Rhea" id="RHEA:42788"/>
        <dbReference type="Rhea" id="RHEA-COMP:10244"/>
        <dbReference type="Rhea" id="RHEA-COMP:10245"/>
        <dbReference type="ChEBI" id="CHEBI:15378"/>
        <dbReference type="ChEBI" id="CHEBI:57856"/>
        <dbReference type="ChEBI" id="CHEBI:59789"/>
        <dbReference type="ChEBI" id="CHEBI:74495"/>
        <dbReference type="ChEBI" id="CHEBI:82748"/>
        <dbReference type="EC" id="2.1.1.186"/>
    </reaction>
</comment>
<comment type="subunit">
    <text evidence="1">Monomer.</text>
</comment>
<comment type="subcellular location">
    <subcellularLocation>
        <location evidence="1">Cytoplasm</location>
    </subcellularLocation>
</comment>
<comment type="similarity">
    <text evidence="1">Belongs to the class I-like SAM-binding methyltransferase superfamily. RNA methyltransferase RlmE family. RlmM subfamily.</text>
</comment>
<organism>
    <name type="scientific">Shewanella sp. (strain ANA-3)</name>
    <dbReference type="NCBI Taxonomy" id="94122"/>
    <lineage>
        <taxon>Bacteria</taxon>
        <taxon>Pseudomonadati</taxon>
        <taxon>Pseudomonadota</taxon>
        <taxon>Gammaproteobacteria</taxon>
        <taxon>Alteromonadales</taxon>
        <taxon>Shewanellaceae</taxon>
        <taxon>Shewanella</taxon>
    </lineage>
</organism>
<gene>
    <name evidence="1" type="primary">rlmM</name>
    <name type="ordered locus">Shewana3_2891</name>
</gene>
<accession>A0KZ99</accession>
<feature type="chain" id="PRO_0000314540" description="Ribosomal RNA large subunit methyltransferase M">
    <location>
        <begin position="1"/>
        <end position="361"/>
    </location>
</feature>
<feature type="active site" description="Proton acceptor" evidence="1">
    <location>
        <position position="305"/>
    </location>
</feature>
<feature type="binding site" evidence="1">
    <location>
        <position position="187"/>
    </location>
    <ligand>
        <name>S-adenosyl-L-methionine</name>
        <dbReference type="ChEBI" id="CHEBI:59789"/>
    </ligand>
</feature>
<feature type="binding site" evidence="1">
    <location>
        <begin position="220"/>
        <end position="223"/>
    </location>
    <ligand>
        <name>S-adenosyl-L-methionine</name>
        <dbReference type="ChEBI" id="CHEBI:59789"/>
    </ligand>
</feature>
<feature type="binding site" evidence="1">
    <location>
        <position position="239"/>
    </location>
    <ligand>
        <name>S-adenosyl-L-methionine</name>
        <dbReference type="ChEBI" id="CHEBI:59789"/>
    </ligand>
</feature>
<feature type="binding site" evidence="1">
    <location>
        <position position="259"/>
    </location>
    <ligand>
        <name>S-adenosyl-L-methionine</name>
        <dbReference type="ChEBI" id="CHEBI:59789"/>
    </ligand>
</feature>
<feature type="binding site" evidence="1">
    <location>
        <position position="276"/>
    </location>
    <ligand>
        <name>S-adenosyl-L-methionine</name>
        <dbReference type="ChEBI" id="CHEBI:59789"/>
    </ligand>
</feature>
<dbReference type="EC" id="2.1.1.186" evidence="1"/>
<dbReference type="EMBL" id="CP000469">
    <property type="protein sequence ID" value="ABK49118.1"/>
    <property type="molecule type" value="Genomic_DNA"/>
</dbReference>
<dbReference type="RefSeq" id="WP_011717757.1">
    <property type="nucleotide sequence ID" value="NC_008577.1"/>
</dbReference>
<dbReference type="SMR" id="A0KZ99"/>
<dbReference type="STRING" id="94122.Shewana3_2891"/>
<dbReference type="KEGG" id="shn:Shewana3_2891"/>
<dbReference type="eggNOG" id="COG2933">
    <property type="taxonomic scope" value="Bacteria"/>
</dbReference>
<dbReference type="HOGENOM" id="CLU_043780_0_0_6"/>
<dbReference type="OrthoDB" id="154490at2"/>
<dbReference type="Proteomes" id="UP000002589">
    <property type="component" value="Chromosome"/>
</dbReference>
<dbReference type="GO" id="GO:0005737">
    <property type="term" value="C:cytoplasm"/>
    <property type="evidence" value="ECO:0007669"/>
    <property type="project" value="UniProtKB-SubCell"/>
</dbReference>
<dbReference type="GO" id="GO:0008757">
    <property type="term" value="F:S-adenosylmethionine-dependent methyltransferase activity"/>
    <property type="evidence" value="ECO:0007669"/>
    <property type="project" value="UniProtKB-UniRule"/>
</dbReference>
<dbReference type="GO" id="GO:0032259">
    <property type="term" value="P:methylation"/>
    <property type="evidence" value="ECO:0007669"/>
    <property type="project" value="UniProtKB-KW"/>
</dbReference>
<dbReference type="GO" id="GO:0006364">
    <property type="term" value="P:rRNA processing"/>
    <property type="evidence" value="ECO:0007669"/>
    <property type="project" value="UniProtKB-UniRule"/>
</dbReference>
<dbReference type="Gene3D" id="3.30.2300.20">
    <property type="match status" value="1"/>
</dbReference>
<dbReference type="Gene3D" id="3.30.70.2810">
    <property type="match status" value="1"/>
</dbReference>
<dbReference type="Gene3D" id="3.40.50.150">
    <property type="entry name" value="Vaccinia Virus protein VP39"/>
    <property type="match status" value="1"/>
</dbReference>
<dbReference type="HAMAP" id="MF_01551">
    <property type="entry name" value="23SrRNA_methyltr_M"/>
    <property type="match status" value="1"/>
</dbReference>
<dbReference type="InterPro" id="IPR040739">
    <property type="entry name" value="RlmM_FDX"/>
</dbReference>
<dbReference type="InterPro" id="IPR048646">
    <property type="entry name" value="RlmM_THUMP-like"/>
</dbReference>
<dbReference type="InterPro" id="IPR002877">
    <property type="entry name" value="RNA_MeTrfase_FtsJ_dom"/>
</dbReference>
<dbReference type="InterPro" id="IPR011224">
    <property type="entry name" value="rRNA_MeTrfase_M"/>
</dbReference>
<dbReference type="InterPro" id="IPR029063">
    <property type="entry name" value="SAM-dependent_MTases_sf"/>
</dbReference>
<dbReference type="NCBIfam" id="NF008734">
    <property type="entry name" value="PRK11760.1"/>
    <property type="match status" value="1"/>
</dbReference>
<dbReference type="PANTHER" id="PTHR37524">
    <property type="entry name" value="RIBOSOMAL RNA LARGE SUBUNIT METHYLTRANSFERASE M"/>
    <property type="match status" value="1"/>
</dbReference>
<dbReference type="PANTHER" id="PTHR37524:SF2">
    <property type="entry name" value="RIBOSOMAL RNA METHYLTRANSFERASE FTSJ DOMAIN-CONTAINING PROTEIN"/>
    <property type="match status" value="1"/>
</dbReference>
<dbReference type="Pfam" id="PF01728">
    <property type="entry name" value="FtsJ"/>
    <property type="match status" value="1"/>
</dbReference>
<dbReference type="Pfam" id="PF18125">
    <property type="entry name" value="RlmM_FDX"/>
    <property type="match status" value="1"/>
</dbReference>
<dbReference type="Pfam" id="PF21239">
    <property type="entry name" value="RLMM_N"/>
    <property type="match status" value="1"/>
</dbReference>
<dbReference type="PIRSF" id="PIRSF028774">
    <property type="entry name" value="UCP028774"/>
    <property type="match status" value="1"/>
</dbReference>
<dbReference type="SUPFAM" id="SSF53335">
    <property type="entry name" value="S-adenosyl-L-methionine-dependent methyltransferases"/>
    <property type="match status" value="1"/>
</dbReference>
<evidence type="ECO:0000255" key="1">
    <source>
        <dbReference type="HAMAP-Rule" id="MF_01551"/>
    </source>
</evidence>
<keyword id="KW-0963">Cytoplasm</keyword>
<keyword id="KW-0489">Methyltransferase</keyword>
<keyword id="KW-0698">rRNA processing</keyword>
<keyword id="KW-0949">S-adenosyl-L-methionine</keyword>
<keyword id="KW-0808">Transferase</keyword>
<name>RLMM_SHESA</name>